<evidence type="ECO:0000255" key="1"/>
<evidence type="ECO:0000303" key="2">
    <source>
    </source>
</evidence>
<evidence type="ECO:0000305" key="3"/>
<reference key="1">
    <citation type="journal article" date="2004" name="Nat. Genet.">
        <title>Complete sequencing and characterization of 21,243 full-length human cDNAs.</title>
        <authorList>
            <person name="Ota T."/>
            <person name="Suzuki Y."/>
            <person name="Nishikawa T."/>
            <person name="Otsuki T."/>
            <person name="Sugiyama T."/>
            <person name="Irie R."/>
            <person name="Wakamatsu A."/>
            <person name="Hayashi K."/>
            <person name="Sato H."/>
            <person name="Nagai K."/>
            <person name="Kimura K."/>
            <person name="Makita H."/>
            <person name="Sekine M."/>
            <person name="Obayashi M."/>
            <person name="Nishi T."/>
            <person name="Shibahara T."/>
            <person name="Tanaka T."/>
            <person name="Ishii S."/>
            <person name="Yamamoto J."/>
            <person name="Saito K."/>
            <person name="Kawai Y."/>
            <person name="Isono Y."/>
            <person name="Nakamura Y."/>
            <person name="Nagahari K."/>
            <person name="Murakami K."/>
            <person name="Yasuda T."/>
            <person name="Iwayanagi T."/>
            <person name="Wagatsuma M."/>
            <person name="Shiratori A."/>
            <person name="Sudo H."/>
            <person name="Hosoiri T."/>
            <person name="Kaku Y."/>
            <person name="Kodaira H."/>
            <person name="Kondo H."/>
            <person name="Sugawara M."/>
            <person name="Takahashi M."/>
            <person name="Kanda K."/>
            <person name="Yokoi T."/>
            <person name="Furuya T."/>
            <person name="Kikkawa E."/>
            <person name="Omura Y."/>
            <person name="Abe K."/>
            <person name="Kamihara K."/>
            <person name="Katsuta N."/>
            <person name="Sato K."/>
            <person name="Tanikawa M."/>
            <person name="Yamazaki M."/>
            <person name="Ninomiya K."/>
            <person name="Ishibashi T."/>
            <person name="Yamashita H."/>
            <person name="Murakawa K."/>
            <person name="Fujimori K."/>
            <person name="Tanai H."/>
            <person name="Kimata M."/>
            <person name="Watanabe M."/>
            <person name="Hiraoka S."/>
            <person name="Chiba Y."/>
            <person name="Ishida S."/>
            <person name="Ono Y."/>
            <person name="Takiguchi S."/>
            <person name="Watanabe S."/>
            <person name="Yosida M."/>
            <person name="Hotuta T."/>
            <person name="Kusano J."/>
            <person name="Kanehori K."/>
            <person name="Takahashi-Fujii A."/>
            <person name="Hara H."/>
            <person name="Tanase T.-O."/>
            <person name="Nomura Y."/>
            <person name="Togiya S."/>
            <person name="Komai F."/>
            <person name="Hara R."/>
            <person name="Takeuchi K."/>
            <person name="Arita M."/>
            <person name="Imose N."/>
            <person name="Musashino K."/>
            <person name="Yuuki H."/>
            <person name="Oshima A."/>
            <person name="Sasaki N."/>
            <person name="Aotsuka S."/>
            <person name="Yoshikawa Y."/>
            <person name="Matsunawa H."/>
            <person name="Ichihara T."/>
            <person name="Shiohata N."/>
            <person name="Sano S."/>
            <person name="Moriya S."/>
            <person name="Momiyama H."/>
            <person name="Satoh N."/>
            <person name="Takami S."/>
            <person name="Terashima Y."/>
            <person name="Suzuki O."/>
            <person name="Nakagawa S."/>
            <person name="Senoh A."/>
            <person name="Mizoguchi H."/>
            <person name="Goto Y."/>
            <person name="Shimizu F."/>
            <person name="Wakebe H."/>
            <person name="Hishigaki H."/>
            <person name="Watanabe T."/>
            <person name="Sugiyama A."/>
            <person name="Takemoto M."/>
            <person name="Kawakami B."/>
            <person name="Yamazaki M."/>
            <person name="Watanabe K."/>
            <person name="Kumagai A."/>
            <person name="Itakura S."/>
            <person name="Fukuzumi Y."/>
            <person name="Fujimori Y."/>
            <person name="Komiyama M."/>
            <person name="Tashiro H."/>
            <person name="Tanigami A."/>
            <person name="Fujiwara T."/>
            <person name="Ono T."/>
            <person name="Yamada K."/>
            <person name="Fujii Y."/>
            <person name="Ozaki K."/>
            <person name="Hirao M."/>
            <person name="Ohmori Y."/>
            <person name="Kawabata A."/>
            <person name="Hikiji T."/>
            <person name="Kobatake N."/>
            <person name="Inagaki H."/>
            <person name="Ikema Y."/>
            <person name="Okamoto S."/>
            <person name="Okitani R."/>
            <person name="Kawakami T."/>
            <person name="Noguchi S."/>
            <person name="Itoh T."/>
            <person name="Shigeta K."/>
            <person name="Senba T."/>
            <person name="Matsumura K."/>
            <person name="Nakajima Y."/>
            <person name="Mizuno T."/>
            <person name="Morinaga M."/>
            <person name="Sasaki M."/>
            <person name="Togashi T."/>
            <person name="Oyama M."/>
            <person name="Hata H."/>
            <person name="Watanabe M."/>
            <person name="Komatsu T."/>
            <person name="Mizushima-Sugano J."/>
            <person name="Satoh T."/>
            <person name="Shirai Y."/>
            <person name="Takahashi Y."/>
            <person name="Nakagawa K."/>
            <person name="Okumura K."/>
            <person name="Nagase T."/>
            <person name="Nomura N."/>
            <person name="Kikuchi H."/>
            <person name="Masuho Y."/>
            <person name="Yamashita R."/>
            <person name="Nakai K."/>
            <person name="Yada T."/>
            <person name="Nakamura Y."/>
            <person name="Ohara O."/>
            <person name="Isogai T."/>
            <person name="Sugano S."/>
        </authorList>
    </citation>
    <scope>NUCLEOTIDE SEQUENCE [LARGE SCALE MRNA] (ISOFORM 1)</scope>
    <source>
        <tissue>Placenta</tissue>
    </source>
</reference>
<reference key="2">
    <citation type="submission" date="2005-09" db="EMBL/GenBank/DDBJ databases">
        <authorList>
            <person name="Mural R.J."/>
            <person name="Istrail S."/>
            <person name="Sutton G.G."/>
            <person name="Florea L."/>
            <person name="Halpern A.L."/>
            <person name="Mobarry C.M."/>
            <person name="Lippert R."/>
            <person name="Walenz B."/>
            <person name="Shatkay H."/>
            <person name="Dew I."/>
            <person name="Miller J.R."/>
            <person name="Flanigan M.J."/>
            <person name="Edwards N.J."/>
            <person name="Bolanos R."/>
            <person name="Fasulo D."/>
            <person name="Halldorsson B.V."/>
            <person name="Hannenhalli S."/>
            <person name="Turner R."/>
            <person name="Yooseph S."/>
            <person name="Lu F."/>
            <person name="Nusskern D.R."/>
            <person name="Shue B.C."/>
            <person name="Zheng X.H."/>
            <person name="Zhong F."/>
            <person name="Delcher A.L."/>
            <person name="Huson D.H."/>
            <person name="Kravitz S.A."/>
            <person name="Mouchard L."/>
            <person name="Reinert K."/>
            <person name="Remington K.A."/>
            <person name="Clark A.G."/>
            <person name="Waterman M.S."/>
            <person name="Eichler E.E."/>
            <person name="Adams M.D."/>
            <person name="Hunkapiller M.W."/>
            <person name="Myers E.W."/>
            <person name="Venter J.C."/>
        </authorList>
    </citation>
    <scope>NUCLEOTIDE SEQUENCE [LARGE SCALE GENOMIC DNA]</scope>
</reference>
<reference key="3">
    <citation type="journal article" date="2004" name="Genome Res.">
        <title>The status, quality, and expansion of the NIH full-length cDNA project: the Mammalian Gene Collection (MGC).</title>
        <authorList>
            <consortium name="The MGC Project Team"/>
        </authorList>
    </citation>
    <scope>NUCLEOTIDE SEQUENCE [LARGE SCALE MRNA] (ISOFORMS 1 AND 2)</scope>
    <source>
        <tissue>Hippocampus</tissue>
    </source>
</reference>
<sequence length="345" mass="37653">MSNNGADLTFGYISCFVAILLFGSNFVPLKKFDTGDGMFLQWVLCAAIWLVALVVNLILHCPKFWPFAMLGGCIWATGNIAVVPIIKTIGLGLGILIWGSFNALTGWASSRFGWFGLDAEEVSNPLLNYIGAGLSVVSAFIFLFIKSEIPNNTCSMDTTPLITEHVINTTQDPCSWVDKLSTVHHRIVGCSLAVISGVLYGSTFVPIIYIKDHSKRNDSIYAGASQYDLDYVFAHFSGIFLTSTVYFLAYCIAMKNSPKLYPEAVLPGFLSGVLWAIATCCWFIANHSLSAVVSFPIITAGPGFIAAMWGIFMFKEIKGLQNYLLMILAFCIILTGALCTAFSKI</sequence>
<dbReference type="EMBL" id="AK002017">
    <property type="protein sequence ID" value="BAA92037.1"/>
    <property type="molecule type" value="mRNA"/>
</dbReference>
<dbReference type="EMBL" id="CH471056">
    <property type="protein sequence ID" value="EAX04859.1"/>
    <property type="molecule type" value="Genomic_DNA"/>
</dbReference>
<dbReference type="EMBL" id="CH471056">
    <property type="protein sequence ID" value="EAX04860.1"/>
    <property type="molecule type" value="Genomic_DNA"/>
</dbReference>
<dbReference type="EMBL" id="CH471056">
    <property type="protein sequence ID" value="EAX04861.1"/>
    <property type="molecule type" value="Genomic_DNA"/>
</dbReference>
<dbReference type="EMBL" id="CH471056">
    <property type="protein sequence ID" value="EAX04862.1"/>
    <property type="molecule type" value="Genomic_DNA"/>
</dbReference>
<dbReference type="EMBL" id="BC036551">
    <property type="protein sequence ID" value="AAH36551.1"/>
    <property type="molecule type" value="mRNA"/>
</dbReference>
<dbReference type="EMBL" id="BC048117">
    <property type="protein sequence ID" value="AAH48117.1"/>
    <property type="molecule type" value="mRNA"/>
</dbReference>
<dbReference type="EMBL" id="BC054487">
    <property type="protein sequence ID" value="AAH54487.1"/>
    <property type="molecule type" value="mRNA"/>
</dbReference>
<dbReference type="EMBL" id="BC060875">
    <property type="protein sequence ID" value="AAH60875.1"/>
    <property type="molecule type" value="mRNA"/>
</dbReference>
<dbReference type="CCDS" id="CCDS3799.1">
    <molecule id="Q7Z5S9-1"/>
</dbReference>
<dbReference type="RefSeq" id="NP_060812.2">
    <molecule id="Q7Z5S9-1"/>
    <property type="nucleotide sequence ID" value="NM_018342.4"/>
</dbReference>
<dbReference type="RefSeq" id="XP_005263167.1">
    <molecule id="Q7Z5S9-1"/>
    <property type="nucleotide sequence ID" value="XM_005263110.3"/>
</dbReference>
<dbReference type="RefSeq" id="XP_005263169.1">
    <property type="nucleotide sequence ID" value="XM_005263112.3"/>
</dbReference>
<dbReference type="RefSeq" id="XP_006714317.1">
    <property type="nucleotide sequence ID" value="XM_006714254.1"/>
</dbReference>
<dbReference type="RefSeq" id="XP_016863855.1">
    <molecule id="Q7Z5S9-1"/>
    <property type="nucleotide sequence ID" value="XM_017008366.2"/>
</dbReference>
<dbReference type="BioGRID" id="120596">
    <property type="interactions" value="8"/>
</dbReference>
<dbReference type="FunCoup" id="Q7Z5S9">
    <property type="interactions" value="15"/>
</dbReference>
<dbReference type="IntAct" id="Q7Z5S9">
    <property type="interactions" value="7"/>
</dbReference>
<dbReference type="MINT" id="Q7Z5S9"/>
<dbReference type="STRING" id="9606.ENSP00000296529"/>
<dbReference type="TCDB" id="2.A.7.8.3">
    <property type="family name" value="the drug/metabolite transporter (dmt) superfamily"/>
</dbReference>
<dbReference type="iPTMnet" id="Q7Z5S9"/>
<dbReference type="PhosphoSitePlus" id="Q7Z5S9"/>
<dbReference type="BioMuta" id="TMEM144"/>
<dbReference type="DMDM" id="74738741"/>
<dbReference type="MassIVE" id="Q7Z5S9"/>
<dbReference type="PaxDb" id="9606-ENSP00000296529"/>
<dbReference type="PeptideAtlas" id="Q7Z5S9"/>
<dbReference type="Antibodypedia" id="28144">
    <property type="antibodies" value="32 antibodies from 13 providers"/>
</dbReference>
<dbReference type="DNASU" id="55314"/>
<dbReference type="Ensembl" id="ENST00000296529.11">
    <molecule id="Q7Z5S9-1"/>
    <property type="protein sequence ID" value="ENSP00000296529.6"/>
    <property type="gene ID" value="ENSG00000164124.11"/>
</dbReference>
<dbReference type="Ensembl" id="ENST00000514558.5">
    <molecule id="Q7Z5S9-2"/>
    <property type="protein sequence ID" value="ENSP00000426211.1"/>
    <property type="gene ID" value="ENSG00000164124.11"/>
</dbReference>
<dbReference type="GeneID" id="55314"/>
<dbReference type="KEGG" id="hsa:55314"/>
<dbReference type="MANE-Select" id="ENST00000296529.11">
    <property type="protein sequence ID" value="ENSP00000296529.6"/>
    <property type="RefSeq nucleotide sequence ID" value="NM_018342.5"/>
    <property type="RefSeq protein sequence ID" value="NP_060812.2"/>
</dbReference>
<dbReference type="UCSC" id="uc003ipx.4">
    <molecule id="Q7Z5S9-1"/>
    <property type="organism name" value="human"/>
</dbReference>
<dbReference type="AGR" id="HGNC:25633"/>
<dbReference type="CTD" id="55314"/>
<dbReference type="DisGeNET" id="55314"/>
<dbReference type="GeneCards" id="TMEM144"/>
<dbReference type="HGNC" id="HGNC:25633">
    <property type="gene designation" value="TMEM144"/>
</dbReference>
<dbReference type="HPA" id="ENSG00000164124">
    <property type="expression patterns" value="Tissue enriched (brain)"/>
</dbReference>
<dbReference type="MIM" id="620325">
    <property type="type" value="gene"/>
</dbReference>
<dbReference type="neXtProt" id="NX_Q7Z5S9"/>
<dbReference type="OpenTargets" id="ENSG00000164124"/>
<dbReference type="PharmGKB" id="PA144596252"/>
<dbReference type="VEuPathDB" id="HostDB:ENSG00000164124"/>
<dbReference type="eggNOG" id="ENOG502QR0F">
    <property type="taxonomic scope" value="Eukaryota"/>
</dbReference>
<dbReference type="GeneTree" id="ENSGT00390000012574"/>
<dbReference type="HOGENOM" id="CLU_031844_1_0_1"/>
<dbReference type="InParanoid" id="Q7Z5S9"/>
<dbReference type="OMA" id="FCHFSGI"/>
<dbReference type="OrthoDB" id="426527at2759"/>
<dbReference type="PAN-GO" id="Q7Z5S9">
    <property type="GO annotations" value="0 GO annotations based on evolutionary models"/>
</dbReference>
<dbReference type="PhylomeDB" id="Q7Z5S9"/>
<dbReference type="TreeFam" id="TF313673"/>
<dbReference type="PathwayCommons" id="Q7Z5S9"/>
<dbReference type="SignaLink" id="Q7Z5S9"/>
<dbReference type="BioGRID-ORCS" id="55314">
    <property type="hits" value="11 hits in 1158 CRISPR screens"/>
</dbReference>
<dbReference type="ChiTaRS" id="TMEM144">
    <property type="organism name" value="human"/>
</dbReference>
<dbReference type="GenomeRNAi" id="55314"/>
<dbReference type="Pharos" id="Q7Z5S9">
    <property type="development level" value="Tdark"/>
</dbReference>
<dbReference type="PRO" id="PR:Q7Z5S9"/>
<dbReference type="Proteomes" id="UP000005640">
    <property type="component" value="Chromosome 4"/>
</dbReference>
<dbReference type="RNAct" id="Q7Z5S9">
    <property type="molecule type" value="protein"/>
</dbReference>
<dbReference type="Bgee" id="ENSG00000164124">
    <property type="expression patterns" value="Expressed in corpus callosum and 163 other cell types or tissues"/>
</dbReference>
<dbReference type="ExpressionAtlas" id="Q7Z5S9">
    <property type="expression patterns" value="baseline and differential"/>
</dbReference>
<dbReference type="GO" id="GO:0016020">
    <property type="term" value="C:membrane"/>
    <property type="evidence" value="ECO:0007669"/>
    <property type="project" value="UniProtKB-SubCell"/>
</dbReference>
<dbReference type="GO" id="GO:0015144">
    <property type="term" value="F:carbohydrate transmembrane transporter activity"/>
    <property type="evidence" value="ECO:0007669"/>
    <property type="project" value="InterPro"/>
</dbReference>
<dbReference type="InterPro" id="IPR010651">
    <property type="entry name" value="Sugar_transport"/>
</dbReference>
<dbReference type="InterPro" id="IPR012435">
    <property type="entry name" value="TMEM144"/>
</dbReference>
<dbReference type="PANTHER" id="PTHR16119">
    <property type="entry name" value="TRANSMEMBRANE PROTEIN 144"/>
    <property type="match status" value="1"/>
</dbReference>
<dbReference type="PANTHER" id="PTHR16119:SF17">
    <property type="entry name" value="TRANSMEMBRANE PROTEIN 144"/>
    <property type="match status" value="1"/>
</dbReference>
<dbReference type="Pfam" id="PF07857">
    <property type="entry name" value="TMEM144"/>
    <property type="match status" value="1"/>
</dbReference>
<dbReference type="SUPFAM" id="SSF103481">
    <property type="entry name" value="Multidrug resistance efflux transporter EmrE"/>
    <property type="match status" value="1"/>
</dbReference>
<proteinExistence type="evidence at protein level"/>
<feature type="chain" id="PRO_0000288971" description="Transmembrane protein 144">
    <location>
        <begin position="1"/>
        <end position="345"/>
    </location>
</feature>
<feature type="transmembrane region" description="Helical" evidence="1">
    <location>
        <begin position="8"/>
        <end position="28"/>
    </location>
</feature>
<feature type="transmembrane region" description="Helical" evidence="1">
    <location>
        <begin position="39"/>
        <end position="59"/>
    </location>
</feature>
<feature type="transmembrane region" description="Helical" evidence="1">
    <location>
        <begin position="64"/>
        <end position="86"/>
    </location>
</feature>
<feature type="transmembrane region" description="Helical" evidence="1">
    <location>
        <begin position="93"/>
        <end position="115"/>
    </location>
</feature>
<feature type="transmembrane region" description="Helical" evidence="1">
    <location>
        <begin position="125"/>
        <end position="145"/>
    </location>
</feature>
<feature type="transmembrane region" description="Helical" evidence="1">
    <location>
        <begin position="190"/>
        <end position="210"/>
    </location>
</feature>
<feature type="transmembrane region" description="Helical" evidence="1">
    <location>
        <begin position="232"/>
        <end position="252"/>
    </location>
</feature>
<feature type="transmembrane region" description="Helical" evidence="1">
    <location>
        <begin position="264"/>
        <end position="284"/>
    </location>
</feature>
<feature type="transmembrane region" description="Helical" evidence="1">
    <location>
        <begin position="292"/>
        <end position="312"/>
    </location>
</feature>
<feature type="transmembrane region" description="Helical" evidence="1">
    <location>
        <begin position="323"/>
        <end position="343"/>
    </location>
</feature>
<feature type="splice variant" id="VSP_025850" description="In isoform 2." evidence="2">
    <original>INT</original>
    <variation>SIV</variation>
    <location>
        <begin position="167"/>
        <end position="169"/>
    </location>
</feature>
<feature type="splice variant" id="VSP_025851" description="In isoform 2." evidence="2">
    <location>
        <begin position="170"/>
        <end position="345"/>
    </location>
</feature>
<feature type="sequence variant" id="VAR_032544" description="In dbSNP:rs34277853.">
    <original>D</original>
    <variation>G</variation>
    <location>
        <position position="157"/>
    </location>
</feature>
<feature type="sequence conflict" description="In Ref. 1; BAA92037." evidence="3" ref="1">
    <original>I</original>
    <variation>V</variation>
    <location>
        <position position="89"/>
    </location>
</feature>
<feature type="sequence conflict" description="In Ref. 1; BAA92037." evidence="3" ref="1">
    <original>K</original>
    <variation>E</variation>
    <location>
        <position position="344"/>
    </location>
</feature>
<protein>
    <recommendedName>
        <fullName>Transmembrane protein 144</fullName>
    </recommendedName>
</protein>
<comment type="interaction">
    <interactant intactId="EBI-12876358">
        <id>Q7Z5S9</id>
    </interactant>
    <interactant intactId="EBI-13059134">
        <id>Q13520</id>
        <label>AQP6</label>
    </interactant>
    <organismsDiffer>false</organismsDiffer>
    <experiments>3</experiments>
</comment>
<comment type="interaction">
    <interactant intactId="EBI-12876358">
        <id>Q7Z5S9</id>
    </interactant>
    <interactant intactId="EBI-2833872">
        <id>O15552</id>
        <label>FFAR2</label>
    </interactant>
    <organismsDiffer>false</organismsDiffer>
    <experiments>3</experiments>
</comment>
<comment type="interaction">
    <interactant intactId="EBI-12876358">
        <id>Q7Z5S9</id>
    </interactant>
    <interactant intactId="EBI-2868124">
        <id>Q9BSE4</id>
        <label>HERPUD2</label>
    </interactant>
    <organismsDiffer>false</organismsDiffer>
    <experiments>3</experiments>
</comment>
<comment type="interaction">
    <interactant intactId="EBI-12876358">
        <id>Q7Z5S9</id>
    </interactant>
    <interactant intactId="EBI-17280858">
        <id>Q8WWF3</id>
        <label>SSMEM1</label>
    </interactant>
    <organismsDiffer>false</organismsDiffer>
    <experiments>3</experiments>
</comment>
<comment type="interaction">
    <interactant intactId="EBI-12876358">
        <id>Q7Z5S9</id>
    </interactant>
    <interactant intactId="EBI-6268651">
        <id>Q9NPL8</id>
        <label>TIMMDC1</label>
    </interactant>
    <organismsDiffer>false</organismsDiffer>
    <experiments>3</experiments>
</comment>
<comment type="interaction">
    <interactant intactId="EBI-12876358">
        <id>Q7Z5S9</id>
    </interactant>
    <interactant intactId="EBI-10982110">
        <id>Q96Q45-2</id>
        <label>TMEM237</label>
    </interactant>
    <organismsDiffer>false</organismsDiffer>
    <experiments>3</experiments>
</comment>
<comment type="subcellular location">
    <subcellularLocation>
        <location evidence="3">Membrane</location>
        <topology evidence="3">Multi-pass membrane protein</topology>
    </subcellularLocation>
</comment>
<comment type="alternative products">
    <event type="alternative splicing"/>
    <isoform>
        <id>Q7Z5S9-1</id>
        <name>1</name>
        <sequence type="displayed"/>
    </isoform>
    <isoform>
        <id>Q7Z5S9-2</id>
        <name>2</name>
        <sequence type="described" ref="VSP_025850 VSP_025851"/>
    </isoform>
</comment>
<comment type="similarity">
    <text evidence="3">Belongs to the TMEM144 family.</text>
</comment>
<organism>
    <name type="scientific">Homo sapiens</name>
    <name type="common">Human</name>
    <dbReference type="NCBI Taxonomy" id="9606"/>
    <lineage>
        <taxon>Eukaryota</taxon>
        <taxon>Metazoa</taxon>
        <taxon>Chordata</taxon>
        <taxon>Craniata</taxon>
        <taxon>Vertebrata</taxon>
        <taxon>Euteleostomi</taxon>
        <taxon>Mammalia</taxon>
        <taxon>Eutheria</taxon>
        <taxon>Euarchontoglires</taxon>
        <taxon>Primates</taxon>
        <taxon>Haplorrhini</taxon>
        <taxon>Catarrhini</taxon>
        <taxon>Hominidae</taxon>
        <taxon>Homo</taxon>
    </lineage>
</organism>
<gene>
    <name type="primary">TMEM144</name>
</gene>
<keyword id="KW-0025">Alternative splicing</keyword>
<keyword id="KW-0472">Membrane</keyword>
<keyword id="KW-1267">Proteomics identification</keyword>
<keyword id="KW-1185">Reference proteome</keyword>
<keyword id="KW-0812">Transmembrane</keyword>
<keyword id="KW-1133">Transmembrane helix</keyword>
<name>TM144_HUMAN</name>
<accession>Q7Z5S9</accession>
<accession>D3DP24</accession>
<accession>Q49A05</accession>
<accession>Q9NUT3</accession>